<protein>
    <recommendedName>
        <fullName evidence="1">Succinyl-diaminopimelate desuccinylase</fullName>
        <shortName evidence="1">SDAP desuccinylase</shortName>
        <ecNumber evidence="1">3.5.1.18</ecNumber>
    </recommendedName>
    <alternativeName>
        <fullName evidence="1">N-succinyl-LL-2,6-diaminoheptanedioate amidohydrolase</fullName>
    </alternativeName>
</protein>
<gene>
    <name evidence="1" type="primary">dapE</name>
    <name type="ordered locus">PputGB1_1130</name>
</gene>
<comment type="function">
    <text evidence="1">Catalyzes the hydrolysis of N-succinyl-L,L-diaminopimelic acid (SDAP), forming succinate and LL-2,6-diaminopimelate (DAP), an intermediate involved in the bacterial biosynthesis of lysine and meso-diaminopimelic acid, an essential component of bacterial cell walls.</text>
</comment>
<comment type="catalytic activity">
    <reaction evidence="1">
        <text>N-succinyl-(2S,6S)-2,6-diaminopimelate + H2O = (2S,6S)-2,6-diaminopimelate + succinate</text>
        <dbReference type="Rhea" id="RHEA:22608"/>
        <dbReference type="ChEBI" id="CHEBI:15377"/>
        <dbReference type="ChEBI" id="CHEBI:30031"/>
        <dbReference type="ChEBI" id="CHEBI:57609"/>
        <dbReference type="ChEBI" id="CHEBI:58087"/>
        <dbReference type="EC" id="3.5.1.18"/>
    </reaction>
</comment>
<comment type="cofactor">
    <cofactor evidence="1">
        <name>Zn(2+)</name>
        <dbReference type="ChEBI" id="CHEBI:29105"/>
    </cofactor>
    <cofactor evidence="1">
        <name>Co(2+)</name>
        <dbReference type="ChEBI" id="CHEBI:48828"/>
    </cofactor>
    <text evidence="1">Binds 2 Zn(2+) or Co(2+) ions per subunit.</text>
</comment>
<comment type="pathway">
    <text evidence="1">Amino-acid biosynthesis; L-lysine biosynthesis via DAP pathway; LL-2,6-diaminopimelate from (S)-tetrahydrodipicolinate (succinylase route): step 3/3.</text>
</comment>
<comment type="subunit">
    <text evidence="1">Homodimer.</text>
</comment>
<comment type="similarity">
    <text evidence="1">Belongs to the peptidase M20A family. DapE subfamily.</text>
</comment>
<evidence type="ECO:0000255" key="1">
    <source>
        <dbReference type="HAMAP-Rule" id="MF_01690"/>
    </source>
</evidence>
<keyword id="KW-0028">Amino-acid biosynthesis</keyword>
<keyword id="KW-0170">Cobalt</keyword>
<keyword id="KW-0220">Diaminopimelate biosynthesis</keyword>
<keyword id="KW-0378">Hydrolase</keyword>
<keyword id="KW-0457">Lysine biosynthesis</keyword>
<keyword id="KW-0479">Metal-binding</keyword>
<keyword id="KW-0862">Zinc</keyword>
<proteinExistence type="inferred from homology"/>
<dbReference type="EC" id="3.5.1.18" evidence="1"/>
<dbReference type="EMBL" id="CP000926">
    <property type="protein sequence ID" value="ABY97038.1"/>
    <property type="molecule type" value="Genomic_DNA"/>
</dbReference>
<dbReference type="RefSeq" id="WP_012270818.1">
    <property type="nucleotide sequence ID" value="NC_010322.1"/>
</dbReference>
<dbReference type="SMR" id="B0KS83"/>
<dbReference type="KEGG" id="ppg:PputGB1_1130"/>
<dbReference type="eggNOG" id="COG0624">
    <property type="taxonomic scope" value="Bacteria"/>
</dbReference>
<dbReference type="HOGENOM" id="CLU_021802_4_0_6"/>
<dbReference type="UniPathway" id="UPA00034">
    <property type="reaction ID" value="UER00021"/>
</dbReference>
<dbReference type="Proteomes" id="UP000002157">
    <property type="component" value="Chromosome"/>
</dbReference>
<dbReference type="GO" id="GO:0008777">
    <property type="term" value="F:acetylornithine deacetylase activity"/>
    <property type="evidence" value="ECO:0007669"/>
    <property type="project" value="TreeGrafter"/>
</dbReference>
<dbReference type="GO" id="GO:0050897">
    <property type="term" value="F:cobalt ion binding"/>
    <property type="evidence" value="ECO:0007669"/>
    <property type="project" value="UniProtKB-UniRule"/>
</dbReference>
<dbReference type="GO" id="GO:0009014">
    <property type="term" value="F:succinyl-diaminopimelate desuccinylase activity"/>
    <property type="evidence" value="ECO:0007669"/>
    <property type="project" value="UniProtKB-UniRule"/>
</dbReference>
<dbReference type="GO" id="GO:0008270">
    <property type="term" value="F:zinc ion binding"/>
    <property type="evidence" value="ECO:0007669"/>
    <property type="project" value="UniProtKB-UniRule"/>
</dbReference>
<dbReference type="GO" id="GO:0019877">
    <property type="term" value="P:diaminopimelate biosynthetic process"/>
    <property type="evidence" value="ECO:0007669"/>
    <property type="project" value="UniProtKB-UniRule"/>
</dbReference>
<dbReference type="GO" id="GO:0006526">
    <property type="term" value="P:L-arginine biosynthetic process"/>
    <property type="evidence" value="ECO:0007669"/>
    <property type="project" value="TreeGrafter"/>
</dbReference>
<dbReference type="GO" id="GO:0009089">
    <property type="term" value="P:lysine biosynthetic process via diaminopimelate"/>
    <property type="evidence" value="ECO:0007669"/>
    <property type="project" value="UniProtKB-UniRule"/>
</dbReference>
<dbReference type="CDD" id="cd03891">
    <property type="entry name" value="M20_DapE_proteobac"/>
    <property type="match status" value="1"/>
</dbReference>
<dbReference type="FunFam" id="3.30.70.360:FF:000011">
    <property type="entry name" value="Succinyl-diaminopimelate desuccinylase"/>
    <property type="match status" value="1"/>
</dbReference>
<dbReference type="FunFam" id="3.40.630.10:FF:000005">
    <property type="entry name" value="Succinyl-diaminopimelate desuccinylase"/>
    <property type="match status" value="1"/>
</dbReference>
<dbReference type="Gene3D" id="1.10.150.900">
    <property type="match status" value="1"/>
</dbReference>
<dbReference type="Gene3D" id="3.30.70.360">
    <property type="match status" value="1"/>
</dbReference>
<dbReference type="Gene3D" id="3.40.630.10">
    <property type="entry name" value="Zn peptidases"/>
    <property type="match status" value="1"/>
</dbReference>
<dbReference type="HAMAP" id="MF_01690">
    <property type="entry name" value="DapE"/>
    <property type="match status" value="1"/>
</dbReference>
<dbReference type="InterPro" id="IPR001261">
    <property type="entry name" value="ArgE/DapE_CS"/>
</dbReference>
<dbReference type="InterPro" id="IPR036264">
    <property type="entry name" value="Bact_exopeptidase_dim_dom"/>
</dbReference>
<dbReference type="InterPro" id="IPR005941">
    <property type="entry name" value="DapE_proteobac"/>
</dbReference>
<dbReference type="InterPro" id="IPR002933">
    <property type="entry name" value="Peptidase_M20"/>
</dbReference>
<dbReference type="InterPro" id="IPR011650">
    <property type="entry name" value="Peptidase_M20_dimer"/>
</dbReference>
<dbReference type="InterPro" id="IPR050072">
    <property type="entry name" value="Peptidase_M20A"/>
</dbReference>
<dbReference type="NCBIfam" id="TIGR01246">
    <property type="entry name" value="dapE_proteo"/>
    <property type="match status" value="1"/>
</dbReference>
<dbReference type="NCBIfam" id="NF009557">
    <property type="entry name" value="PRK13009.1"/>
    <property type="match status" value="1"/>
</dbReference>
<dbReference type="PANTHER" id="PTHR43808">
    <property type="entry name" value="ACETYLORNITHINE DEACETYLASE"/>
    <property type="match status" value="1"/>
</dbReference>
<dbReference type="PANTHER" id="PTHR43808:SF31">
    <property type="entry name" value="N-ACETYL-L-CITRULLINE DEACETYLASE"/>
    <property type="match status" value="1"/>
</dbReference>
<dbReference type="Pfam" id="PF07687">
    <property type="entry name" value="M20_dimer"/>
    <property type="match status" value="1"/>
</dbReference>
<dbReference type="Pfam" id="PF01546">
    <property type="entry name" value="Peptidase_M20"/>
    <property type="match status" value="1"/>
</dbReference>
<dbReference type="SUPFAM" id="SSF55031">
    <property type="entry name" value="Bacterial exopeptidase dimerisation domain"/>
    <property type="match status" value="1"/>
</dbReference>
<dbReference type="SUPFAM" id="SSF53187">
    <property type="entry name" value="Zn-dependent exopeptidases"/>
    <property type="match status" value="1"/>
</dbReference>
<dbReference type="PROSITE" id="PS00759">
    <property type="entry name" value="ARGE_DAPE_CPG2_2"/>
    <property type="match status" value="1"/>
</dbReference>
<reference key="1">
    <citation type="submission" date="2008-01" db="EMBL/GenBank/DDBJ databases">
        <title>Complete sequence of Pseudomonas putida GB-1.</title>
        <authorList>
            <consortium name="US DOE Joint Genome Institute"/>
            <person name="Copeland A."/>
            <person name="Lucas S."/>
            <person name="Lapidus A."/>
            <person name="Barry K."/>
            <person name="Glavina del Rio T."/>
            <person name="Dalin E."/>
            <person name="Tice H."/>
            <person name="Pitluck S."/>
            <person name="Bruce D."/>
            <person name="Goodwin L."/>
            <person name="Chertkov O."/>
            <person name="Brettin T."/>
            <person name="Detter J.C."/>
            <person name="Han C."/>
            <person name="Kuske C.R."/>
            <person name="Schmutz J."/>
            <person name="Larimer F."/>
            <person name="Land M."/>
            <person name="Hauser L."/>
            <person name="Kyrpides N."/>
            <person name="Kim E."/>
            <person name="McCarthy J.K."/>
            <person name="Richardson P."/>
        </authorList>
    </citation>
    <scope>NUCLEOTIDE SEQUENCE [LARGE SCALE GENOMIC DNA]</scope>
    <source>
        <strain>GB-1</strain>
    </source>
</reference>
<name>DAPE_PSEPG</name>
<sequence>MTAPAELSPTLQLACDLIRRPSVTPVDADCQAQMMNRLGAVGFELEPMRIEDVDNFWATHGSQDGPVLCFAGHTDVVPTGPVQQWQHEPFEALIDADGMLCGRGAADMKGSLASMVIASERFVQDYPNHRGKVAFLITSDEEGPAHHGTKAVVERLKARNERLDWCIVGEPSSTTLLGDVVKNGRRGSLGAKLTVRGKQGHVAYPHLARNPIHLAAPALAELAAEHWDEGNAFFPPTSFQISNLNSGTGATNVVPGELTALFNFRFSTESTVEGLQARVSAILDKHELDWSIDWALSGLPFLTEPGELLDAVASSIKGVTGRDTQPSTSGGTSDGRFIATMGTQVVELGPVNATIHQVDERILASDLDLLTEIYYQTLVRLLA</sequence>
<accession>B0KS83</accession>
<feature type="chain" id="PRO_0000375662" description="Succinyl-diaminopimelate desuccinylase">
    <location>
        <begin position="1"/>
        <end position="383"/>
    </location>
</feature>
<feature type="active site" evidence="1">
    <location>
        <position position="75"/>
    </location>
</feature>
<feature type="active site" description="Proton acceptor" evidence="1">
    <location>
        <position position="141"/>
    </location>
</feature>
<feature type="binding site" evidence="1">
    <location>
        <position position="73"/>
    </location>
    <ligand>
        <name>Zn(2+)</name>
        <dbReference type="ChEBI" id="CHEBI:29105"/>
        <label>1</label>
    </ligand>
</feature>
<feature type="binding site" evidence="1">
    <location>
        <position position="107"/>
    </location>
    <ligand>
        <name>Zn(2+)</name>
        <dbReference type="ChEBI" id="CHEBI:29105"/>
        <label>1</label>
    </ligand>
</feature>
<feature type="binding site" evidence="1">
    <location>
        <position position="107"/>
    </location>
    <ligand>
        <name>Zn(2+)</name>
        <dbReference type="ChEBI" id="CHEBI:29105"/>
        <label>2</label>
    </ligand>
</feature>
<feature type="binding site" evidence="1">
    <location>
        <position position="142"/>
    </location>
    <ligand>
        <name>Zn(2+)</name>
        <dbReference type="ChEBI" id="CHEBI:29105"/>
        <label>2</label>
    </ligand>
</feature>
<feature type="binding site" evidence="1">
    <location>
        <position position="170"/>
    </location>
    <ligand>
        <name>Zn(2+)</name>
        <dbReference type="ChEBI" id="CHEBI:29105"/>
        <label>1</label>
    </ligand>
</feature>
<feature type="binding site" evidence="1">
    <location>
        <position position="356"/>
    </location>
    <ligand>
        <name>Zn(2+)</name>
        <dbReference type="ChEBI" id="CHEBI:29105"/>
        <label>2</label>
    </ligand>
</feature>
<organism>
    <name type="scientific">Pseudomonas putida (strain GB-1)</name>
    <dbReference type="NCBI Taxonomy" id="76869"/>
    <lineage>
        <taxon>Bacteria</taxon>
        <taxon>Pseudomonadati</taxon>
        <taxon>Pseudomonadota</taxon>
        <taxon>Gammaproteobacteria</taxon>
        <taxon>Pseudomonadales</taxon>
        <taxon>Pseudomonadaceae</taxon>
        <taxon>Pseudomonas</taxon>
    </lineage>
</organism>